<gene>
    <name evidence="1" type="primary">glmM</name>
    <name type="ordered locus">TW155</name>
</gene>
<keyword id="KW-0413">Isomerase</keyword>
<keyword id="KW-0460">Magnesium</keyword>
<keyword id="KW-0479">Metal-binding</keyword>
<keyword id="KW-0597">Phosphoprotein</keyword>
<name>GLMM_TROW8</name>
<evidence type="ECO:0000255" key="1">
    <source>
        <dbReference type="HAMAP-Rule" id="MF_01554"/>
    </source>
</evidence>
<reference key="1">
    <citation type="journal article" date="2003" name="Lancet">
        <title>Sequencing and analysis of the genome of the Whipple's disease bacterium Tropheryma whipplei.</title>
        <authorList>
            <person name="Bentley S.D."/>
            <person name="Maiwald M."/>
            <person name="Murphy L.D."/>
            <person name="Pallen M.J."/>
            <person name="Yeats C.A."/>
            <person name="Dover L.G."/>
            <person name="Norbertczak H.T."/>
            <person name="Besra G.S."/>
            <person name="Quail M.A."/>
            <person name="Harris D.E."/>
            <person name="von Herbay A."/>
            <person name="Goble A."/>
            <person name="Rutter S."/>
            <person name="Squares R."/>
            <person name="Squares S."/>
            <person name="Barrell B.G."/>
            <person name="Parkhill J."/>
            <person name="Relman D.A."/>
        </authorList>
    </citation>
    <scope>NUCLEOTIDE SEQUENCE [LARGE SCALE GENOMIC DNA]</scope>
    <source>
        <strain>TW08/27</strain>
    </source>
</reference>
<accession>Q83NS5</accession>
<feature type="chain" id="PRO_0000147994" description="Phosphoglucosamine mutase">
    <location>
        <begin position="1"/>
        <end position="453"/>
    </location>
</feature>
<feature type="active site" description="Phosphoserine intermediate" evidence="1">
    <location>
        <position position="110"/>
    </location>
</feature>
<feature type="binding site" description="via phosphate group" evidence="1">
    <location>
        <position position="110"/>
    </location>
    <ligand>
        <name>Mg(2+)</name>
        <dbReference type="ChEBI" id="CHEBI:18420"/>
    </ligand>
</feature>
<feature type="binding site" evidence="1">
    <location>
        <position position="247"/>
    </location>
    <ligand>
        <name>Mg(2+)</name>
        <dbReference type="ChEBI" id="CHEBI:18420"/>
    </ligand>
</feature>
<feature type="binding site" evidence="1">
    <location>
        <position position="249"/>
    </location>
    <ligand>
        <name>Mg(2+)</name>
        <dbReference type="ChEBI" id="CHEBI:18420"/>
    </ligand>
</feature>
<feature type="binding site" evidence="1">
    <location>
        <position position="251"/>
    </location>
    <ligand>
        <name>Mg(2+)</name>
        <dbReference type="ChEBI" id="CHEBI:18420"/>
    </ligand>
</feature>
<feature type="modified residue" description="Phosphoserine" evidence="1">
    <location>
        <position position="110"/>
    </location>
</feature>
<comment type="function">
    <text evidence="1">Catalyzes the conversion of glucosamine-6-phosphate to glucosamine-1-phosphate.</text>
</comment>
<comment type="catalytic activity">
    <reaction evidence="1">
        <text>alpha-D-glucosamine 1-phosphate = D-glucosamine 6-phosphate</text>
        <dbReference type="Rhea" id="RHEA:23424"/>
        <dbReference type="ChEBI" id="CHEBI:58516"/>
        <dbReference type="ChEBI" id="CHEBI:58725"/>
        <dbReference type="EC" id="5.4.2.10"/>
    </reaction>
</comment>
<comment type="cofactor">
    <cofactor evidence="1">
        <name>Mg(2+)</name>
        <dbReference type="ChEBI" id="CHEBI:18420"/>
    </cofactor>
    <text evidence="1">Binds 1 Mg(2+) ion per subunit.</text>
</comment>
<comment type="PTM">
    <text evidence="1">Activated by phosphorylation.</text>
</comment>
<comment type="similarity">
    <text evidence="1">Belongs to the phosphohexose mutase family.</text>
</comment>
<sequence>MARLFGTDGIRALANGDLLTPELAMAVARAAAVVFTHGRVAKRRQVLGKRPVAIVARDPRISGDFLVAAISAGLASSGVDVLDAGVIPTPAVAFLVKNANADFGFMISASHNPGYDNGVKIFAHGGVKLPDVVEDRIEYFLDKQKLSPIGSKVGRITRFVDAEDRYQMHLLSTLFTRIDGVKVVIDCANGAASGVSPDVFKSAGAAVKVICADPNGVNINDGVGSAYPERLRAEVIRNSATLGLAFDGDADRCIAVDSNGNTVDGDQIMAILARSMQQRGTLRNKTLVTTIMSNIGLDRAMKKLGINLKRTQVGDRYVIEAMTQGGFNIGGEQSGHIILSDYSTAGDGILAGLHLCAEIIRTGKSLTDLASIMEIVPQVTANIETDDPTTLLNNKKIRHEISRIEKSLKGRVVIRPSGTEPLIRIMVEDLNPEKAERACSHLADFFKQEIQKS</sequence>
<organism>
    <name type="scientific">Tropheryma whipplei (strain TW08/27)</name>
    <name type="common">Whipple's bacillus</name>
    <dbReference type="NCBI Taxonomy" id="218496"/>
    <lineage>
        <taxon>Bacteria</taxon>
        <taxon>Bacillati</taxon>
        <taxon>Actinomycetota</taxon>
        <taxon>Actinomycetes</taxon>
        <taxon>Micrococcales</taxon>
        <taxon>Tropherymataceae</taxon>
        <taxon>Tropheryma</taxon>
    </lineage>
</organism>
<proteinExistence type="inferred from homology"/>
<dbReference type="EC" id="5.4.2.10" evidence="1"/>
<dbReference type="EMBL" id="BX251410">
    <property type="protein sequence ID" value="CAD66835.1"/>
    <property type="molecule type" value="Genomic_DNA"/>
</dbReference>
<dbReference type="RefSeq" id="WP_011096116.1">
    <property type="nucleotide sequence ID" value="NC_004551.1"/>
</dbReference>
<dbReference type="SMR" id="Q83NS5"/>
<dbReference type="GeneID" id="67387929"/>
<dbReference type="KEGG" id="tws:TW155"/>
<dbReference type="HOGENOM" id="CLU_016950_7_0_11"/>
<dbReference type="GO" id="GO:0005829">
    <property type="term" value="C:cytosol"/>
    <property type="evidence" value="ECO:0007669"/>
    <property type="project" value="TreeGrafter"/>
</dbReference>
<dbReference type="GO" id="GO:0000287">
    <property type="term" value="F:magnesium ion binding"/>
    <property type="evidence" value="ECO:0007669"/>
    <property type="project" value="UniProtKB-UniRule"/>
</dbReference>
<dbReference type="GO" id="GO:0008966">
    <property type="term" value="F:phosphoglucosamine mutase activity"/>
    <property type="evidence" value="ECO:0007669"/>
    <property type="project" value="UniProtKB-UniRule"/>
</dbReference>
<dbReference type="GO" id="GO:0004615">
    <property type="term" value="F:phosphomannomutase activity"/>
    <property type="evidence" value="ECO:0007669"/>
    <property type="project" value="TreeGrafter"/>
</dbReference>
<dbReference type="GO" id="GO:0005975">
    <property type="term" value="P:carbohydrate metabolic process"/>
    <property type="evidence" value="ECO:0007669"/>
    <property type="project" value="InterPro"/>
</dbReference>
<dbReference type="GO" id="GO:0009252">
    <property type="term" value="P:peptidoglycan biosynthetic process"/>
    <property type="evidence" value="ECO:0007669"/>
    <property type="project" value="TreeGrafter"/>
</dbReference>
<dbReference type="GO" id="GO:0006048">
    <property type="term" value="P:UDP-N-acetylglucosamine biosynthetic process"/>
    <property type="evidence" value="ECO:0007669"/>
    <property type="project" value="TreeGrafter"/>
</dbReference>
<dbReference type="CDD" id="cd05802">
    <property type="entry name" value="GlmM"/>
    <property type="match status" value="1"/>
</dbReference>
<dbReference type="FunFam" id="3.40.120.10:FF:000001">
    <property type="entry name" value="Phosphoglucosamine mutase"/>
    <property type="match status" value="1"/>
</dbReference>
<dbReference type="FunFam" id="3.40.120.10:FF:000002">
    <property type="entry name" value="Phosphoglucosamine mutase"/>
    <property type="match status" value="1"/>
</dbReference>
<dbReference type="Gene3D" id="3.40.120.10">
    <property type="entry name" value="Alpha-D-Glucose-1,6-Bisphosphate, subunit A, domain 3"/>
    <property type="match status" value="3"/>
</dbReference>
<dbReference type="Gene3D" id="3.30.310.50">
    <property type="entry name" value="Alpha-D-phosphohexomutase, C-terminal domain"/>
    <property type="match status" value="1"/>
</dbReference>
<dbReference type="HAMAP" id="MF_01554_B">
    <property type="entry name" value="GlmM_B"/>
    <property type="match status" value="1"/>
</dbReference>
<dbReference type="InterPro" id="IPR005844">
    <property type="entry name" value="A-D-PHexomutase_a/b/a-I"/>
</dbReference>
<dbReference type="InterPro" id="IPR016055">
    <property type="entry name" value="A-D-PHexomutase_a/b/a-I/II/III"/>
</dbReference>
<dbReference type="InterPro" id="IPR005845">
    <property type="entry name" value="A-D-PHexomutase_a/b/a-II"/>
</dbReference>
<dbReference type="InterPro" id="IPR005846">
    <property type="entry name" value="A-D-PHexomutase_a/b/a-III"/>
</dbReference>
<dbReference type="InterPro" id="IPR005843">
    <property type="entry name" value="A-D-PHexomutase_C"/>
</dbReference>
<dbReference type="InterPro" id="IPR036900">
    <property type="entry name" value="A-D-PHexomutase_C_sf"/>
</dbReference>
<dbReference type="InterPro" id="IPR016066">
    <property type="entry name" value="A-D-PHexomutase_CS"/>
</dbReference>
<dbReference type="InterPro" id="IPR005841">
    <property type="entry name" value="Alpha-D-phosphohexomutase_SF"/>
</dbReference>
<dbReference type="InterPro" id="IPR006352">
    <property type="entry name" value="GlmM_bact"/>
</dbReference>
<dbReference type="InterPro" id="IPR050060">
    <property type="entry name" value="Phosphoglucosamine_mutase"/>
</dbReference>
<dbReference type="NCBIfam" id="TIGR01455">
    <property type="entry name" value="glmM"/>
    <property type="match status" value="1"/>
</dbReference>
<dbReference type="PANTHER" id="PTHR42946:SF1">
    <property type="entry name" value="PHOSPHOGLUCOMUTASE (ALPHA-D-GLUCOSE-1,6-BISPHOSPHATE-DEPENDENT)"/>
    <property type="match status" value="1"/>
</dbReference>
<dbReference type="PANTHER" id="PTHR42946">
    <property type="entry name" value="PHOSPHOHEXOSE MUTASE"/>
    <property type="match status" value="1"/>
</dbReference>
<dbReference type="Pfam" id="PF02878">
    <property type="entry name" value="PGM_PMM_I"/>
    <property type="match status" value="1"/>
</dbReference>
<dbReference type="Pfam" id="PF02879">
    <property type="entry name" value="PGM_PMM_II"/>
    <property type="match status" value="1"/>
</dbReference>
<dbReference type="Pfam" id="PF02880">
    <property type="entry name" value="PGM_PMM_III"/>
    <property type="match status" value="1"/>
</dbReference>
<dbReference type="Pfam" id="PF00408">
    <property type="entry name" value="PGM_PMM_IV"/>
    <property type="match status" value="1"/>
</dbReference>
<dbReference type="PRINTS" id="PR00509">
    <property type="entry name" value="PGMPMM"/>
</dbReference>
<dbReference type="SUPFAM" id="SSF55957">
    <property type="entry name" value="Phosphoglucomutase, C-terminal domain"/>
    <property type="match status" value="1"/>
</dbReference>
<dbReference type="SUPFAM" id="SSF53738">
    <property type="entry name" value="Phosphoglucomutase, first 3 domains"/>
    <property type="match status" value="3"/>
</dbReference>
<dbReference type="PROSITE" id="PS00710">
    <property type="entry name" value="PGM_PMM"/>
    <property type="match status" value="1"/>
</dbReference>
<protein>
    <recommendedName>
        <fullName evidence="1">Phosphoglucosamine mutase</fullName>
        <ecNumber evidence="1">5.4.2.10</ecNumber>
    </recommendedName>
</protein>